<evidence type="ECO:0000250" key="1"/>
<evidence type="ECO:0000255" key="2">
    <source>
        <dbReference type="PROSITE-ProRule" id="PRU00977"/>
    </source>
</evidence>
<evidence type="ECO:0000305" key="3"/>
<organism>
    <name type="scientific">Enterobacteria phage T4</name>
    <name type="common">Bacteriophage T4</name>
    <dbReference type="NCBI Taxonomy" id="10665"/>
    <lineage>
        <taxon>Viruses</taxon>
        <taxon>Duplodnaviria</taxon>
        <taxon>Heunggongvirae</taxon>
        <taxon>Uroviricota</taxon>
        <taxon>Caudoviricetes</taxon>
        <taxon>Straboviridae</taxon>
        <taxon>Tevenvirinae</taxon>
        <taxon>Tequatrovirus</taxon>
    </lineage>
</organism>
<reference key="1">
    <citation type="submission" date="1996-02" db="EMBL/GenBank/DDBJ databases">
        <authorList>
            <person name="Parker M.L."/>
            <person name="Doermann A.H."/>
        </authorList>
    </citation>
    <scope>PRELIMINARY NUCLEOTIDE SEQUENCE</scope>
    <source>
        <strain>D</strain>
    </source>
</reference>
<reference key="2">
    <citation type="submission" date="1996-02" db="EMBL/GenBank/DDBJ databases">
        <authorList>
            <person name="Kadyrov F.A."/>
            <person name="Kryukov V.M."/>
        </authorList>
    </citation>
    <scope>NUCLEOTIDE SEQUENCE [GENOMIC DNA]</scope>
</reference>
<reference key="3">
    <citation type="journal article" date="2003" name="Microbiol. Mol. Biol. Rev.">
        <title>Bacteriophage T4 genome.</title>
        <authorList>
            <person name="Miller E.S."/>
            <person name="Kutter E."/>
            <person name="Mosig G."/>
            <person name="Arisaka F."/>
            <person name="Kunisawa T."/>
            <person name="Ruger W."/>
        </authorList>
    </citation>
    <scope>NUCLEOTIDE SEQUENCE [LARGE SCALE GENOMIC DNA]</scope>
</reference>
<reference key="4">
    <citation type="journal article" date="1992" name="Proc. Natl. Acad. Sci. U.S.A.">
        <title>Identification of a family of bacteriophage T4 genes encoding proteins similar to those present in group I introns of fungi and phage.</title>
        <authorList>
            <person name="Sharma M."/>
            <person name="Ellis R.L."/>
            <person name="Hinton D.M."/>
        </authorList>
    </citation>
    <scope>IDENTIFICATION</scope>
    <scope>POSSIBLE FUNCTION</scope>
</reference>
<sequence>MFKMKYLIYQITNIINGKIYIGAHATLDENDGYMGSGVNIKKSIKKYGIHNFKKEILYSFSSSEEMYKMEALLVNEEFVMRTDTYNAAIGGRGNPVIVHLQDPSYRNMLSIRTKEGMTVEAKRKISKAKTGVKQSDETIAKRVKGRNEYYKTHVHPRKNKPISISHRKAISEKLGGIKKFIPICIKGVKFDNPDYAAEHFKVSPKTIRNWINADDMPDCYRIK</sequence>
<comment type="function">
    <text>Probably involved in the movement of the endonuclease-encoding DNA.</text>
</comment>
<comment type="cofactor">
    <cofactor evidence="1">
        <name>Mg(2+)</name>
        <dbReference type="ChEBI" id="CHEBI:18420"/>
    </cofactor>
</comment>
<comment type="similarity">
    <text evidence="3">To endonucleases of group I introns of fungi and phage.</text>
</comment>
<feature type="chain" id="PRO_0000164983" description="Putative endonuclease segD">
    <location>
        <begin position="1"/>
        <end position="223"/>
    </location>
</feature>
<feature type="domain" description="GIY-YIG" evidence="2">
    <location>
        <begin position="4"/>
        <end position="87"/>
    </location>
</feature>
<proteinExistence type="predicted"/>
<name>SEGD_BPT4</name>
<dbReference type="EC" id="3.1.-.-"/>
<dbReference type="EMBL" id="U48703">
    <property type="protein sequence ID" value="AAA91468.1"/>
    <property type="status" value="ALT_SEQ"/>
    <property type="molecule type" value="Genomic_DNA"/>
</dbReference>
<dbReference type="EMBL" id="Z69340">
    <property type="protein sequence ID" value="CAA93272.1"/>
    <property type="molecule type" value="Genomic_DNA"/>
</dbReference>
<dbReference type="EMBL" id="AF158101">
    <property type="protein sequence ID" value="AAD42657.2"/>
    <property type="molecule type" value="Genomic_DNA"/>
</dbReference>
<dbReference type="PIR" id="C46026">
    <property type="entry name" value="C46026"/>
</dbReference>
<dbReference type="PIR" id="JF0079">
    <property type="entry name" value="GPBP23"/>
</dbReference>
<dbReference type="RefSeq" id="NP_049788.2">
    <property type="nucleotide sequence ID" value="NC_000866.4"/>
</dbReference>
<dbReference type="SMR" id="P19895"/>
<dbReference type="GeneID" id="1258554"/>
<dbReference type="KEGG" id="vg:1258554"/>
<dbReference type="OrthoDB" id="16308at10239"/>
<dbReference type="Proteomes" id="UP000009087">
    <property type="component" value="Segment"/>
</dbReference>
<dbReference type="GO" id="GO:0004519">
    <property type="term" value="F:endonuclease activity"/>
    <property type="evidence" value="ECO:0007669"/>
    <property type="project" value="UniProtKB-KW"/>
</dbReference>
<dbReference type="CDD" id="cd10444">
    <property type="entry name" value="GIY-YIG_SegABCDEFG"/>
    <property type="match status" value="1"/>
</dbReference>
<dbReference type="Gene3D" id="3.40.1440.10">
    <property type="entry name" value="GIY-YIG endonuclease"/>
    <property type="match status" value="1"/>
</dbReference>
<dbReference type="InterPro" id="IPR000305">
    <property type="entry name" value="GIY-YIG_endonuc"/>
</dbReference>
<dbReference type="InterPro" id="IPR035901">
    <property type="entry name" value="GIY-YIG_endonuc_sf"/>
</dbReference>
<dbReference type="SMART" id="SM00465">
    <property type="entry name" value="GIYc"/>
    <property type="match status" value="1"/>
</dbReference>
<dbReference type="SUPFAM" id="SSF64496">
    <property type="entry name" value="DNA-binding domain of intron-encoded endonucleases"/>
    <property type="match status" value="1"/>
</dbReference>
<dbReference type="SUPFAM" id="SSF82771">
    <property type="entry name" value="GIY-YIG endonuclease"/>
    <property type="match status" value="1"/>
</dbReference>
<dbReference type="PROSITE" id="PS50164">
    <property type="entry name" value="GIY_YIG"/>
    <property type="match status" value="1"/>
</dbReference>
<protein>
    <recommendedName>
        <fullName>Putative endonuclease segD</fullName>
        <ecNumber>3.1.-.-</ecNumber>
    </recommendedName>
    <alternativeName>
        <fullName>Endodeoxyribonuclease segD</fullName>
    </alternativeName>
</protein>
<keyword id="KW-0255">Endonuclease</keyword>
<keyword id="KW-0378">Hydrolase</keyword>
<keyword id="KW-0460">Magnesium</keyword>
<keyword id="KW-0540">Nuclease</keyword>
<keyword id="KW-1185">Reference proteome</keyword>
<organismHost>
    <name type="scientific">Escherichia coli</name>
    <dbReference type="NCBI Taxonomy" id="562"/>
</organismHost>
<accession>P19895</accession>
<accession>Q38047</accession>
<accession>Q9T0U0</accession>
<gene>
    <name type="primary">segD</name>
    <name type="synonym">23.1</name>
</gene>